<keyword id="KW-0131">Cell cycle</keyword>
<keyword id="KW-0132">Cell division</keyword>
<keyword id="KW-0143">Chaperone</keyword>
<keyword id="KW-0963">Cytoplasm</keyword>
<keyword id="KW-0413">Isomerase</keyword>
<keyword id="KW-0697">Rotamase</keyword>
<reference key="1">
    <citation type="submission" date="2008-02" db="EMBL/GenBank/DDBJ databases">
        <title>Complete sequence of chromosome 1 of Burkholderia cenocepacia MC0-3.</title>
        <authorList>
            <person name="Copeland A."/>
            <person name="Lucas S."/>
            <person name="Lapidus A."/>
            <person name="Barry K."/>
            <person name="Bruce D."/>
            <person name="Goodwin L."/>
            <person name="Glavina del Rio T."/>
            <person name="Dalin E."/>
            <person name="Tice H."/>
            <person name="Pitluck S."/>
            <person name="Chain P."/>
            <person name="Malfatti S."/>
            <person name="Shin M."/>
            <person name="Vergez L."/>
            <person name="Schmutz J."/>
            <person name="Larimer F."/>
            <person name="Land M."/>
            <person name="Hauser L."/>
            <person name="Kyrpides N."/>
            <person name="Mikhailova N."/>
            <person name="Tiedje J."/>
            <person name="Richardson P."/>
        </authorList>
    </citation>
    <scope>NUCLEOTIDE SEQUENCE [LARGE SCALE GENOMIC DNA]</scope>
    <source>
        <strain>MC0-3</strain>
    </source>
</reference>
<gene>
    <name evidence="1" type="primary">tig</name>
    <name type="ordered locus">Bcenmc03_1947</name>
</gene>
<comment type="function">
    <text evidence="1">Involved in protein export. Acts as a chaperone by maintaining the newly synthesized protein in an open conformation. Functions as a peptidyl-prolyl cis-trans isomerase.</text>
</comment>
<comment type="catalytic activity">
    <reaction evidence="1">
        <text>[protein]-peptidylproline (omega=180) = [protein]-peptidylproline (omega=0)</text>
        <dbReference type="Rhea" id="RHEA:16237"/>
        <dbReference type="Rhea" id="RHEA-COMP:10747"/>
        <dbReference type="Rhea" id="RHEA-COMP:10748"/>
        <dbReference type="ChEBI" id="CHEBI:83833"/>
        <dbReference type="ChEBI" id="CHEBI:83834"/>
        <dbReference type="EC" id="5.2.1.8"/>
    </reaction>
</comment>
<comment type="subcellular location">
    <subcellularLocation>
        <location>Cytoplasm</location>
    </subcellularLocation>
    <text evidence="1">About half TF is bound to the ribosome near the polypeptide exit tunnel while the other half is free in the cytoplasm.</text>
</comment>
<comment type="domain">
    <text evidence="1">Consists of 3 domains; the N-terminus binds the ribosome, the middle domain has PPIase activity, while the C-terminus has intrinsic chaperone activity on its own.</text>
</comment>
<comment type="similarity">
    <text evidence="1">Belongs to the FKBP-type PPIase family. Tig subfamily.</text>
</comment>
<protein>
    <recommendedName>
        <fullName evidence="1">Trigger factor</fullName>
        <shortName evidence="1">TF</shortName>
        <ecNumber evidence="1">5.2.1.8</ecNumber>
    </recommendedName>
    <alternativeName>
        <fullName evidence="1">PPIase</fullName>
    </alternativeName>
</protein>
<sequence>MANVVENLGKLERRVTISLPKDTVQKEIDARIQKLAKTVRIPGFRPGKVPLKMVAQQYAGQVEAEVLSDKIGQEFFTVSRAENLRVAGQPSFEPKQEQAEDAYAFDATFEVYPEVKIGDLATAEVERSTTSIGDAEIDRTLDILRKQRVHYHARGEAGEHGDGGEDTAAKNGDRVTVDFVGKIDDVAFQGGTAEDFPFVLGEGRMLPEFETAALGLKVGEQRTFDLKFPDDYHGKDVAGKTAQFTVTMKKIEWPHLPEIDAEFAKSLGIEDGDLTKMRAEIKENLEREAKRRTQSIVKNQVMDALLKISELDVPKALIEQDQQRLVEMARQDLAQRGVPNAKDAPIPAEMFAEQAERRVKLGLVLAELVKANGLEAKPEQIRAEVDEFAKSYEDPKEVVRWYYSNQQRLAEMEAFVVESNVVDFVLGKAKVTDKEVSFEALASASAQA</sequence>
<name>TIG_BURO0</name>
<dbReference type="EC" id="5.2.1.8" evidence="1"/>
<dbReference type="EMBL" id="CP000958">
    <property type="protein sequence ID" value="ACA91108.1"/>
    <property type="molecule type" value="Genomic_DNA"/>
</dbReference>
<dbReference type="RefSeq" id="WP_012328700.1">
    <property type="nucleotide sequence ID" value="NC_010508.1"/>
</dbReference>
<dbReference type="SMR" id="B1JTV1"/>
<dbReference type="GeneID" id="83048722"/>
<dbReference type="KEGG" id="bcm:Bcenmc03_1947"/>
<dbReference type="HOGENOM" id="CLU_033058_2_0_4"/>
<dbReference type="Proteomes" id="UP000002169">
    <property type="component" value="Chromosome 1"/>
</dbReference>
<dbReference type="GO" id="GO:0005737">
    <property type="term" value="C:cytoplasm"/>
    <property type="evidence" value="ECO:0007669"/>
    <property type="project" value="UniProtKB-SubCell"/>
</dbReference>
<dbReference type="GO" id="GO:0003755">
    <property type="term" value="F:peptidyl-prolyl cis-trans isomerase activity"/>
    <property type="evidence" value="ECO:0007669"/>
    <property type="project" value="UniProtKB-UniRule"/>
</dbReference>
<dbReference type="GO" id="GO:0044183">
    <property type="term" value="F:protein folding chaperone"/>
    <property type="evidence" value="ECO:0007669"/>
    <property type="project" value="TreeGrafter"/>
</dbReference>
<dbReference type="GO" id="GO:0043022">
    <property type="term" value="F:ribosome binding"/>
    <property type="evidence" value="ECO:0007669"/>
    <property type="project" value="TreeGrafter"/>
</dbReference>
<dbReference type="GO" id="GO:0051083">
    <property type="term" value="P:'de novo' cotranslational protein folding"/>
    <property type="evidence" value="ECO:0007669"/>
    <property type="project" value="TreeGrafter"/>
</dbReference>
<dbReference type="GO" id="GO:0051301">
    <property type="term" value="P:cell division"/>
    <property type="evidence" value="ECO:0007669"/>
    <property type="project" value="UniProtKB-KW"/>
</dbReference>
<dbReference type="GO" id="GO:0061077">
    <property type="term" value="P:chaperone-mediated protein folding"/>
    <property type="evidence" value="ECO:0007669"/>
    <property type="project" value="TreeGrafter"/>
</dbReference>
<dbReference type="GO" id="GO:0015031">
    <property type="term" value="P:protein transport"/>
    <property type="evidence" value="ECO:0007669"/>
    <property type="project" value="UniProtKB-UniRule"/>
</dbReference>
<dbReference type="GO" id="GO:0043335">
    <property type="term" value="P:protein unfolding"/>
    <property type="evidence" value="ECO:0007669"/>
    <property type="project" value="TreeGrafter"/>
</dbReference>
<dbReference type="FunFam" id="3.10.50.40:FF:000001">
    <property type="entry name" value="Trigger factor"/>
    <property type="match status" value="1"/>
</dbReference>
<dbReference type="Gene3D" id="3.10.50.40">
    <property type="match status" value="1"/>
</dbReference>
<dbReference type="Gene3D" id="3.30.70.1050">
    <property type="entry name" value="Trigger factor ribosome-binding domain"/>
    <property type="match status" value="1"/>
</dbReference>
<dbReference type="Gene3D" id="1.10.3120.10">
    <property type="entry name" value="Trigger factor, C-terminal domain"/>
    <property type="match status" value="1"/>
</dbReference>
<dbReference type="HAMAP" id="MF_00303">
    <property type="entry name" value="Trigger_factor_Tig"/>
    <property type="match status" value="1"/>
</dbReference>
<dbReference type="InterPro" id="IPR046357">
    <property type="entry name" value="PPIase_dom_sf"/>
</dbReference>
<dbReference type="InterPro" id="IPR001179">
    <property type="entry name" value="PPIase_FKBP_dom"/>
</dbReference>
<dbReference type="InterPro" id="IPR005215">
    <property type="entry name" value="Trig_fac"/>
</dbReference>
<dbReference type="InterPro" id="IPR008880">
    <property type="entry name" value="Trigger_fac_C"/>
</dbReference>
<dbReference type="InterPro" id="IPR037041">
    <property type="entry name" value="Trigger_fac_C_sf"/>
</dbReference>
<dbReference type="InterPro" id="IPR008881">
    <property type="entry name" value="Trigger_fac_ribosome-bd_bac"/>
</dbReference>
<dbReference type="InterPro" id="IPR036611">
    <property type="entry name" value="Trigger_fac_ribosome-bd_sf"/>
</dbReference>
<dbReference type="InterPro" id="IPR027304">
    <property type="entry name" value="Trigger_fact/SurA_dom_sf"/>
</dbReference>
<dbReference type="NCBIfam" id="TIGR00115">
    <property type="entry name" value="tig"/>
    <property type="match status" value="1"/>
</dbReference>
<dbReference type="PANTHER" id="PTHR30560">
    <property type="entry name" value="TRIGGER FACTOR CHAPERONE AND PEPTIDYL-PROLYL CIS/TRANS ISOMERASE"/>
    <property type="match status" value="1"/>
</dbReference>
<dbReference type="PANTHER" id="PTHR30560:SF3">
    <property type="entry name" value="TRIGGER FACTOR-LIKE PROTEIN TIG, CHLOROPLASTIC"/>
    <property type="match status" value="1"/>
</dbReference>
<dbReference type="Pfam" id="PF00254">
    <property type="entry name" value="FKBP_C"/>
    <property type="match status" value="1"/>
</dbReference>
<dbReference type="Pfam" id="PF05698">
    <property type="entry name" value="Trigger_C"/>
    <property type="match status" value="1"/>
</dbReference>
<dbReference type="Pfam" id="PF05697">
    <property type="entry name" value="Trigger_N"/>
    <property type="match status" value="1"/>
</dbReference>
<dbReference type="PIRSF" id="PIRSF003095">
    <property type="entry name" value="Trigger_factor"/>
    <property type="match status" value="1"/>
</dbReference>
<dbReference type="SUPFAM" id="SSF54534">
    <property type="entry name" value="FKBP-like"/>
    <property type="match status" value="1"/>
</dbReference>
<dbReference type="SUPFAM" id="SSF109998">
    <property type="entry name" value="Triger factor/SurA peptide-binding domain-like"/>
    <property type="match status" value="1"/>
</dbReference>
<dbReference type="SUPFAM" id="SSF102735">
    <property type="entry name" value="Trigger factor ribosome-binding domain"/>
    <property type="match status" value="1"/>
</dbReference>
<dbReference type="PROSITE" id="PS50059">
    <property type="entry name" value="FKBP_PPIASE"/>
    <property type="match status" value="1"/>
</dbReference>
<feature type="chain" id="PRO_1000115508" description="Trigger factor">
    <location>
        <begin position="1"/>
        <end position="448"/>
    </location>
</feature>
<feature type="domain" description="PPIase FKBP-type" evidence="1">
    <location>
        <begin position="172"/>
        <end position="257"/>
    </location>
</feature>
<organism>
    <name type="scientific">Burkholderia orbicola (strain MC0-3)</name>
    <dbReference type="NCBI Taxonomy" id="406425"/>
    <lineage>
        <taxon>Bacteria</taxon>
        <taxon>Pseudomonadati</taxon>
        <taxon>Pseudomonadota</taxon>
        <taxon>Betaproteobacteria</taxon>
        <taxon>Burkholderiales</taxon>
        <taxon>Burkholderiaceae</taxon>
        <taxon>Burkholderia</taxon>
        <taxon>Burkholderia cepacia complex</taxon>
        <taxon>Burkholderia orbicola</taxon>
    </lineage>
</organism>
<evidence type="ECO:0000255" key="1">
    <source>
        <dbReference type="HAMAP-Rule" id="MF_00303"/>
    </source>
</evidence>
<proteinExistence type="inferred from homology"/>
<accession>B1JTV1</accession>